<comment type="function">
    <text evidence="5 8">Accessory protein regulating the assembly of the plastidial Clp protease system (PubMed:21266658, PubMed:25921872). CLPT1 first binds to the heptameric P-ring containing the CLP3-6 subunits followed by CLPT2, and only then does the P-ring combine with the R-ring composed of the clpP1 and CLPR1-4 subunits (PubMed:21266658). Once the core complex is fully assembled, it then associates to the CLPC chaperone partner to form the functional protease (PubMed:21266658). CLPT1 and CLPT2 are partially redundant (PubMed:25921872).</text>
</comment>
<comment type="subunit">
    <text evidence="2 3 4 5 6 7 8">Monomer and homodimer (PubMed:21266658, PubMed:25149061). Binds to the CLP3-6 ring (P-ring) (PubMed:16980539). The dimers monomerize before association to the P-ring (PubMed:21266658). Component of the chloroplastic Clp protease core complex which consist of at least 16 proteins: CLPP4 (3 copies), CLPP5 (3 copies), CLPR4 (2 copies), ClpP1 (1 copy), CLPP6 (1 copy), CLPR2 (1 copy), CLPT1 (1 copy), CLPT2 (1 copy) and 3 copies of CLPP3 and/or CLPR1 and/or CLPR3 (PubMed:11278690, PubMed:14593120). Interacts with CLPC2 and CLPD (PubMed:25149061). Interacts with CPN21 (PubMed:25921872). No interactions with CLPS1 (PubMed:23898032).</text>
</comment>
<comment type="subcellular location">
    <subcellularLocation>
        <location evidence="2 3">Plastid</location>
        <location evidence="2 3">Chloroplast</location>
    </subcellularLocation>
</comment>
<comment type="domain">
    <text evidence="8">The MYFF motif is functionally important for stabilization of the overall ClpPR complex.</text>
</comment>
<comment type="disruption phenotype">
    <text evidence="5 8">No visible phenotype (PubMed:21266658, PubMed:25921872). Clpt1 and clpt2 double mutants show delayed development, reduced plant growth, and virescent, serrated leaves (PubMed:25921872). Clpt1 and clpt2 double mutants are seedling lethal under autotrophic conditions (PubMed:21266658).</text>
</comment>
<comment type="similarity">
    <text evidence="12">Belongs to the ClpA/ClpB family.</text>
</comment>
<comment type="sequence caution" evidence="12">
    <conflict type="erroneous gene model prediction">
        <sequence resource="EMBL-CDS" id="CAB45514"/>
    </conflict>
</comment>
<comment type="sequence caution" evidence="12">
    <conflict type="erroneous gene model prediction">
        <sequence resource="EMBL-CDS" id="CAB81348"/>
    </conflict>
</comment>
<feature type="transit peptide" description="Chloroplast" evidence="13">
    <location>
        <begin position="1"/>
        <end position="64"/>
    </location>
</feature>
<feature type="chain" id="PRO_0000434552" description="ATP-dependent Clp protease ATP-binding subunit CLPT1, chloroplastic">
    <location>
        <begin position="65"/>
        <end position="238"/>
    </location>
</feature>
<feature type="domain" description="Clp R" evidence="1">
    <location>
        <begin position="83"/>
        <end position="228"/>
    </location>
</feature>
<feature type="region of interest" description="Repeat 1" evidence="1">
    <location>
        <begin position="86"/>
        <end position="151"/>
    </location>
</feature>
<feature type="region of interest" description="Repeat 2" evidence="1">
    <location>
        <begin position="163"/>
        <end position="228"/>
    </location>
</feature>
<feature type="mutagenesis site" description="No effect." evidence="8">
    <original>T</original>
    <variation>V</variation>
    <location>
        <position position="111"/>
    </location>
</feature>
<feature type="mutagenesis site" description="Loss of stabilization of ClpP and ClpR ring interaction, but no effect on the interaction with the ClpP ring." evidence="8">
    <original>MYFF</original>
    <variation>AAAA</variation>
    <location>
        <begin position="153"/>
        <end position="156"/>
    </location>
</feature>
<feature type="mutagenesis site" description="No effect." evidence="8">
    <original>T</original>
    <variation>V</variation>
    <location>
        <position position="164"/>
    </location>
</feature>
<feature type="helix" evidence="17">
    <location>
        <begin position="88"/>
        <end position="103"/>
    </location>
</feature>
<feature type="strand" evidence="17">
    <location>
        <begin position="107"/>
        <end position="109"/>
    </location>
</feature>
<feature type="helix" evidence="17">
    <location>
        <begin position="111"/>
        <end position="121"/>
    </location>
</feature>
<feature type="helix" evidence="17">
    <location>
        <begin position="125"/>
        <end position="132"/>
    </location>
</feature>
<feature type="helix" evidence="17">
    <location>
        <begin position="137"/>
        <end position="145"/>
    </location>
</feature>
<feature type="helix" evidence="17">
    <location>
        <begin position="165"/>
        <end position="178"/>
    </location>
</feature>
<feature type="strand" evidence="17">
    <location>
        <begin position="181"/>
        <end position="183"/>
    </location>
</feature>
<feature type="helix" evidence="17">
    <location>
        <begin position="189"/>
        <end position="197"/>
    </location>
</feature>
<feature type="helix" evidence="17">
    <location>
        <begin position="203"/>
        <end position="210"/>
    </location>
</feature>
<feature type="helix" evidence="17">
    <location>
        <begin position="215"/>
        <end position="224"/>
    </location>
</feature>
<proteinExistence type="evidence at protein level"/>
<organism evidence="15">
    <name type="scientific">Arabidopsis thaliana</name>
    <name type="common">Mouse-ear cress</name>
    <dbReference type="NCBI Taxonomy" id="3702"/>
    <lineage>
        <taxon>Eukaryota</taxon>
        <taxon>Viridiplantae</taxon>
        <taxon>Streptophyta</taxon>
        <taxon>Embryophyta</taxon>
        <taxon>Tracheophyta</taxon>
        <taxon>Spermatophyta</taxon>
        <taxon>Magnoliopsida</taxon>
        <taxon>eudicotyledons</taxon>
        <taxon>Gunneridae</taxon>
        <taxon>Pentapetalae</taxon>
        <taxon>rosids</taxon>
        <taxon>malvids</taxon>
        <taxon>Brassicales</taxon>
        <taxon>Brassicaceae</taxon>
        <taxon>Camelineae</taxon>
        <taxon>Arabidopsis</taxon>
    </lineage>
</organism>
<gene>
    <name evidence="11" type="primary">CLPT1</name>
    <name evidence="10" type="synonym">CLPS1</name>
    <name evidence="14" type="ordered locus">At4g25370</name>
    <name evidence="16" type="ORF">T30C3.40</name>
</gene>
<accession>Q93WL3</accession>
<accession>Q9STK0</accession>
<sequence length="238" mass="26050">MASYTVSFIPLTLSNPRIFVSRQNGSPSSSSRIPLTSSLLGKKLLATQPSHRCFVPKLRCLTSASTVLNVPIAQPENGSSDKIPKWSARAIKSLAMGELEARKLKYPSTGTEAILMGILVEGTSTVAKFLRGNGVTLFKVRDETLSLLGKSDMYFFSPEHPPLTEPAQKAIAWAIDEKNKSDVDGELTTAYLLLGVWSQKDSAGRQILEKLGFNEDKAKEVEKSMNEDVDLSFKKQGQ</sequence>
<reference key="1">
    <citation type="journal article" date="1999" name="Nature">
        <title>Sequence and analysis of chromosome 4 of the plant Arabidopsis thaliana.</title>
        <authorList>
            <person name="Mayer K.F.X."/>
            <person name="Schueller C."/>
            <person name="Wambutt R."/>
            <person name="Murphy G."/>
            <person name="Volckaert G."/>
            <person name="Pohl T."/>
            <person name="Duesterhoeft A."/>
            <person name="Stiekema W."/>
            <person name="Entian K.-D."/>
            <person name="Terryn N."/>
            <person name="Harris B."/>
            <person name="Ansorge W."/>
            <person name="Brandt P."/>
            <person name="Grivell L.A."/>
            <person name="Rieger M."/>
            <person name="Weichselgartner M."/>
            <person name="de Simone V."/>
            <person name="Obermaier B."/>
            <person name="Mache R."/>
            <person name="Mueller M."/>
            <person name="Kreis M."/>
            <person name="Delseny M."/>
            <person name="Puigdomenech P."/>
            <person name="Watson M."/>
            <person name="Schmidtheini T."/>
            <person name="Reichert B."/>
            <person name="Portetelle D."/>
            <person name="Perez-Alonso M."/>
            <person name="Boutry M."/>
            <person name="Bancroft I."/>
            <person name="Vos P."/>
            <person name="Hoheisel J."/>
            <person name="Zimmermann W."/>
            <person name="Wedler H."/>
            <person name="Ridley P."/>
            <person name="Langham S.-A."/>
            <person name="McCullagh B."/>
            <person name="Bilham L."/>
            <person name="Robben J."/>
            <person name="van der Schueren J."/>
            <person name="Grymonprez B."/>
            <person name="Chuang Y.-J."/>
            <person name="Vandenbussche F."/>
            <person name="Braeken M."/>
            <person name="Weltjens I."/>
            <person name="Voet M."/>
            <person name="Bastiaens I."/>
            <person name="Aert R."/>
            <person name="Defoor E."/>
            <person name="Weitzenegger T."/>
            <person name="Bothe G."/>
            <person name="Ramsperger U."/>
            <person name="Hilbert H."/>
            <person name="Braun M."/>
            <person name="Holzer E."/>
            <person name="Brandt A."/>
            <person name="Peters S."/>
            <person name="van Staveren M."/>
            <person name="Dirkse W."/>
            <person name="Mooijman P."/>
            <person name="Klein Lankhorst R."/>
            <person name="Rose M."/>
            <person name="Hauf J."/>
            <person name="Koetter P."/>
            <person name="Berneiser S."/>
            <person name="Hempel S."/>
            <person name="Feldpausch M."/>
            <person name="Lamberth S."/>
            <person name="Van den Daele H."/>
            <person name="De Keyser A."/>
            <person name="Buysshaert C."/>
            <person name="Gielen J."/>
            <person name="Villarroel R."/>
            <person name="De Clercq R."/>
            <person name="van Montagu M."/>
            <person name="Rogers J."/>
            <person name="Cronin A."/>
            <person name="Quail M.A."/>
            <person name="Bray-Allen S."/>
            <person name="Clark L."/>
            <person name="Doggett J."/>
            <person name="Hall S."/>
            <person name="Kay M."/>
            <person name="Lennard N."/>
            <person name="McLay K."/>
            <person name="Mayes R."/>
            <person name="Pettett A."/>
            <person name="Rajandream M.A."/>
            <person name="Lyne M."/>
            <person name="Benes V."/>
            <person name="Rechmann S."/>
            <person name="Borkova D."/>
            <person name="Bloecker H."/>
            <person name="Scharfe M."/>
            <person name="Grimm M."/>
            <person name="Loehnert T.-H."/>
            <person name="Dose S."/>
            <person name="de Haan M."/>
            <person name="Maarse A.C."/>
            <person name="Schaefer M."/>
            <person name="Mueller-Auer S."/>
            <person name="Gabel C."/>
            <person name="Fuchs M."/>
            <person name="Fartmann B."/>
            <person name="Granderath K."/>
            <person name="Dauner D."/>
            <person name="Herzl A."/>
            <person name="Neumann S."/>
            <person name="Argiriou A."/>
            <person name="Vitale D."/>
            <person name="Liguori R."/>
            <person name="Piravandi E."/>
            <person name="Massenet O."/>
            <person name="Quigley F."/>
            <person name="Clabauld G."/>
            <person name="Muendlein A."/>
            <person name="Felber R."/>
            <person name="Schnabl S."/>
            <person name="Hiller R."/>
            <person name="Schmidt W."/>
            <person name="Lecharny A."/>
            <person name="Aubourg S."/>
            <person name="Chefdor F."/>
            <person name="Cooke R."/>
            <person name="Berger C."/>
            <person name="Monfort A."/>
            <person name="Casacuberta E."/>
            <person name="Gibbons T."/>
            <person name="Weber N."/>
            <person name="Vandenbol M."/>
            <person name="Bargues M."/>
            <person name="Terol J."/>
            <person name="Torres A."/>
            <person name="Perez-Perez A."/>
            <person name="Purnelle B."/>
            <person name="Bent E."/>
            <person name="Johnson S."/>
            <person name="Tacon D."/>
            <person name="Jesse T."/>
            <person name="Heijnen L."/>
            <person name="Schwarz S."/>
            <person name="Scholler P."/>
            <person name="Heber S."/>
            <person name="Francs P."/>
            <person name="Bielke C."/>
            <person name="Frishman D."/>
            <person name="Haase D."/>
            <person name="Lemcke K."/>
            <person name="Mewes H.-W."/>
            <person name="Stocker S."/>
            <person name="Zaccaria P."/>
            <person name="Bevan M."/>
            <person name="Wilson R.K."/>
            <person name="de la Bastide M."/>
            <person name="Habermann K."/>
            <person name="Parnell L."/>
            <person name="Dedhia N."/>
            <person name="Gnoj L."/>
            <person name="Schutz K."/>
            <person name="Huang E."/>
            <person name="Spiegel L."/>
            <person name="Sekhon M."/>
            <person name="Murray J."/>
            <person name="Sheet P."/>
            <person name="Cordes M."/>
            <person name="Abu-Threideh J."/>
            <person name="Stoneking T."/>
            <person name="Kalicki J."/>
            <person name="Graves T."/>
            <person name="Harmon G."/>
            <person name="Edwards J."/>
            <person name="Latreille P."/>
            <person name="Courtney L."/>
            <person name="Cloud J."/>
            <person name="Abbott A."/>
            <person name="Scott K."/>
            <person name="Johnson D."/>
            <person name="Minx P."/>
            <person name="Bentley D."/>
            <person name="Fulton B."/>
            <person name="Miller N."/>
            <person name="Greco T."/>
            <person name="Kemp K."/>
            <person name="Kramer J."/>
            <person name="Fulton L."/>
            <person name="Mardis E."/>
            <person name="Dante M."/>
            <person name="Pepin K."/>
            <person name="Hillier L.W."/>
            <person name="Nelson J."/>
            <person name="Spieth J."/>
            <person name="Ryan E."/>
            <person name="Andrews S."/>
            <person name="Geisel C."/>
            <person name="Layman D."/>
            <person name="Du H."/>
            <person name="Ali J."/>
            <person name="Berghoff A."/>
            <person name="Jones K."/>
            <person name="Drone K."/>
            <person name="Cotton M."/>
            <person name="Joshu C."/>
            <person name="Antonoiu B."/>
            <person name="Zidanic M."/>
            <person name="Strong C."/>
            <person name="Sun H."/>
            <person name="Lamar B."/>
            <person name="Yordan C."/>
            <person name="Ma P."/>
            <person name="Zhong J."/>
            <person name="Preston R."/>
            <person name="Vil D."/>
            <person name="Shekher M."/>
            <person name="Matero A."/>
            <person name="Shah R."/>
            <person name="Swaby I.K."/>
            <person name="O'Shaughnessy A."/>
            <person name="Rodriguez M."/>
            <person name="Hoffman J."/>
            <person name="Till S."/>
            <person name="Granat S."/>
            <person name="Shohdy N."/>
            <person name="Hasegawa A."/>
            <person name="Hameed A."/>
            <person name="Lodhi M."/>
            <person name="Johnson A."/>
            <person name="Chen E."/>
            <person name="Marra M.A."/>
            <person name="Martienssen R."/>
            <person name="McCombie W.R."/>
        </authorList>
    </citation>
    <scope>NUCLEOTIDE SEQUENCE [LARGE SCALE GENOMIC DNA]</scope>
    <source>
        <strain>cv. Columbia</strain>
    </source>
</reference>
<reference key="2">
    <citation type="journal article" date="2017" name="Plant J.">
        <title>Araport11: a complete reannotation of the Arabidopsis thaliana reference genome.</title>
        <authorList>
            <person name="Cheng C.Y."/>
            <person name="Krishnakumar V."/>
            <person name="Chan A.P."/>
            <person name="Thibaud-Nissen F."/>
            <person name="Schobel S."/>
            <person name="Town C.D."/>
        </authorList>
    </citation>
    <scope>GENOME REANNOTATION</scope>
    <source>
        <strain>cv. Columbia</strain>
    </source>
</reference>
<reference key="3">
    <citation type="journal article" date="2003" name="Science">
        <title>Empirical analysis of transcriptional activity in the Arabidopsis genome.</title>
        <authorList>
            <person name="Yamada K."/>
            <person name="Lim J."/>
            <person name="Dale J.M."/>
            <person name="Chen H."/>
            <person name="Shinn P."/>
            <person name="Palm C.J."/>
            <person name="Southwick A.M."/>
            <person name="Wu H.C."/>
            <person name="Kim C.J."/>
            <person name="Nguyen M."/>
            <person name="Pham P.K."/>
            <person name="Cheuk R.F."/>
            <person name="Karlin-Newmann G."/>
            <person name="Liu S.X."/>
            <person name="Lam B."/>
            <person name="Sakano H."/>
            <person name="Wu T."/>
            <person name="Yu G."/>
            <person name="Miranda M."/>
            <person name="Quach H.L."/>
            <person name="Tripp M."/>
            <person name="Chang C.H."/>
            <person name="Lee J.M."/>
            <person name="Toriumi M.J."/>
            <person name="Chan M.M."/>
            <person name="Tang C.C."/>
            <person name="Onodera C.S."/>
            <person name="Deng J.M."/>
            <person name="Akiyama K."/>
            <person name="Ansari Y."/>
            <person name="Arakawa T."/>
            <person name="Banh J."/>
            <person name="Banno F."/>
            <person name="Bowser L."/>
            <person name="Brooks S.Y."/>
            <person name="Carninci P."/>
            <person name="Chao Q."/>
            <person name="Choy N."/>
            <person name="Enju A."/>
            <person name="Goldsmith A.D."/>
            <person name="Gurjal M."/>
            <person name="Hansen N.F."/>
            <person name="Hayashizaki Y."/>
            <person name="Johnson-Hopson C."/>
            <person name="Hsuan V.W."/>
            <person name="Iida K."/>
            <person name="Karnes M."/>
            <person name="Khan S."/>
            <person name="Koesema E."/>
            <person name="Ishida J."/>
            <person name="Jiang P.X."/>
            <person name="Jones T."/>
            <person name="Kawai J."/>
            <person name="Kamiya A."/>
            <person name="Meyers C."/>
            <person name="Nakajima M."/>
            <person name="Narusaka M."/>
            <person name="Seki M."/>
            <person name="Sakurai T."/>
            <person name="Satou M."/>
            <person name="Tamse R."/>
            <person name="Vaysberg M."/>
            <person name="Wallender E.K."/>
            <person name="Wong C."/>
            <person name="Yamamura Y."/>
            <person name="Yuan S."/>
            <person name="Shinozaki K."/>
            <person name="Davis R.W."/>
            <person name="Theologis A."/>
            <person name="Ecker J.R."/>
        </authorList>
    </citation>
    <scope>NUCLEOTIDE SEQUENCE [LARGE SCALE MRNA]</scope>
    <source>
        <strain>cv. Columbia</strain>
    </source>
</reference>
<reference key="4">
    <citation type="submission" date="2002-03" db="EMBL/GenBank/DDBJ databases">
        <title>Full-length cDNA from Arabidopsis thaliana.</title>
        <authorList>
            <person name="Brover V.V."/>
            <person name="Troukhan M.E."/>
            <person name="Alexandrov N.A."/>
            <person name="Lu Y.-P."/>
            <person name="Flavell R.B."/>
            <person name="Feldmann K.A."/>
        </authorList>
    </citation>
    <scope>NUCLEOTIDE SEQUENCE [LARGE SCALE MRNA]</scope>
</reference>
<reference key="5">
    <citation type="journal article" date="2001" name="J. Biol. Chem.">
        <title>Identification of a 350-kDa ClpP protease complex with 10 different Clp isoforms in chloroplasts of Arabidopsis thaliana.</title>
        <authorList>
            <person name="Peltier J.-B."/>
            <person name="Ytterberg J."/>
            <person name="Liberles D.A."/>
            <person name="Roepstorff P."/>
            <person name="van Wijk K.J."/>
        </authorList>
    </citation>
    <scope>IDENTIFICATION BY MASS SPECTROMETRY</scope>
    <scope>SUBUNIT</scope>
    <scope>SUBCELLULAR LOCATION</scope>
</reference>
<reference key="6">
    <citation type="journal article" date="2004" name="J. Biol. Chem.">
        <title>Clp protease complexes from photosynthetic and non-photosynthetic plastids and mitochondria of plants, their predicted three-dimensional structures, and functional implications.</title>
        <authorList>
            <person name="Peltier J.-B."/>
            <person name="Ripoll D.R."/>
            <person name="Friso G."/>
            <person name="Rudella A."/>
            <person name="Cai Y."/>
            <person name="Ytterberg J."/>
            <person name="Giacomelli L."/>
            <person name="Pillardy J."/>
            <person name="van Wijk K.J."/>
        </authorList>
    </citation>
    <scope>IDENTIFICATION BY MASS SPECTROMETRY</scope>
    <scope>SUBUNIT</scope>
    <scope>SUBCELLULAR LOCATION</scope>
    <scope>3D-STRUCTURE MODELING</scope>
</reference>
<reference key="7">
    <citation type="journal article" date="2005" name="Physiol. Plantarum">
        <title>The ATP-dependent Clp protease in chloroplasts of higher plants.</title>
        <authorList>
            <person name="Clarke A.K."/>
            <person name="MacDonald T.M."/>
            <person name="Sjoegren L.L."/>
        </authorList>
    </citation>
    <scope>NOMENCLATURE</scope>
</reference>
<reference key="8">
    <citation type="journal article" date="2006" name="Plant Cell">
        <title>Structural and functional insights into the chloroplast ATP-dependent Clp protease in Arabidopsis.</title>
        <authorList>
            <person name="Sjoegren L.L.E."/>
            <person name="Stanne T.M."/>
            <person name="Zheng B."/>
            <person name="Sutinen S."/>
            <person name="Clarke A.K."/>
        </authorList>
    </citation>
    <scope>SUBUNIT</scope>
</reference>
<reference key="9">
    <citation type="journal article" date="2011" name="Plant Cell">
        <title>Assembly of the chloroplast ATP-dependent Clp protease in Arabidopsis is regulated by the ClpT accessory proteins.</title>
        <authorList>
            <person name="Sjoegren L.L."/>
            <person name="Clarke A.K."/>
        </authorList>
    </citation>
    <scope>FUNCTION</scope>
    <scope>DISRUPTION PHENOTYPE</scope>
    <scope>SUBUNIT</scope>
</reference>
<reference key="10">
    <citation type="journal article" date="2012" name="Physiol. Plantarum">
        <title>The chloroplast ATP-dependent Clp protease in vascular plants - new dimensions and future challenges.</title>
        <authorList>
            <person name="Clarke A.K."/>
        </authorList>
    </citation>
    <scope>REVIEW</scope>
</reference>
<reference key="11">
    <citation type="journal article" date="2013" name="Plant Cell">
        <title>ClpS1 is a conserved substrate selector for the chloroplast Clp protease system in Arabidopsis.</title>
        <authorList>
            <person name="Nishimura K."/>
            <person name="Asakura Y."/>
            <person name="Friso G."/>
            <person name="Kim J."/>
            <person name="Oh S.H."/>
            <person name="Rutschow H."/>
            <person name="Ponnala L."/>
            <person name="van Wijk K.J."/>
        </authorList>
    </citation>
    <scope>INTERACTION WITH CLPS1</scope>
</reference>
<reference key="12">
    <citation type="journal article" date="2014" name="BMC Plant Biol.">
        <title>Characterization of the accessory protein ClpT1 from Arabidopsis thaliana: oligomerization status and interaction with Hsp100 chaperones.</title>
        <authorList>
            <person name="Colombo C.V."/>
            <person name="Ceccarelli E.A."/>
            <person name="Rosano G.L."/>
        </authorList>
    </citation>
    <scope>SUBUNIT</scope>
    <scope>INTERACTION WITH CLPC2 AND CLPD</scope>
</reference>
<reference key="13">
    <citation type="journal article" date="2015" name="Plant Cell">
        <title>Structures, functions, and interactions of ClpT1 and ClpT2 in the Clp protease system of Arabidopsis chloroplasts.</title>
        <authorList>
            <person name="Kim J."/>
            <person name="Kimber M.S."/>
            <person name="Nishimura K."/>
            <person name="Friso G."/>
            <person name="Schultz L."/>
            <person name="Ponnala L."/>
            <person name="van Wijk K.J."/>
        </authorList>
    </citation>
    <scope>X-RAY CRYSTALLOGRAPHY (2.40 ANGSTROMS) OF 64-238</scope>
    <scope>DISRUPTION PHENOTYPE</scope>
    <scope>IDENTIFICATION BY MASS SPECTROMETRY</scope>
    <scope>CLEAVAGE OF TRANSIT PEPTIDE AFTER ALA-64</scope>
    <scope>FUNCTION</scope>
    <scope>INTERACTION WITH CPN21</scope>
    <scope>MUTAGENESIS OF THR-111; 153-MET--PHE-156 AND THR-164</scope>
    <scope>DOMAIN</scope>
</reference>
<dbReference type="EMBL" id="AL079350">
    <property type="protein sequence ID" value="CAB45514.1"/>
    <property type="status" value="ALT_SEQ"/>
    <property type="molecule type" value="Genomic_DNA"/>
</dbReference>
<dbReference type="EMBL" id="AL161563">
    <property type="protein sequence ID" value="CAB81348.1"/>
    <property type="status" value="ALT_SEQ"/>
    <property type="molecule type" value="Genomic_DNA"/>
</dbReference>
<dbReference type="EMBL" id="CP002687">
    <property type="protein sequence ID" value="AEE85048.1"/>
    <property type="molecule type" value="Genomic_DNA"/>
</dbReference>
<dbReference type="EMBL" id="AY035135">
    <property type="protein sequence ID" value="AAK59640.1"/>
    <property type="molecule type" value="mRNA"/>
</dbReference>
<dbReference type="EMBL" id="AY059070">
    <property type="protein sequence ID" value="AAL15176.1"/>
    <property type="molecule type" value="mRNA"/>
</dbReference>
<dbReference type="EMBL" id="AY086824">
    <property type="protein sequence ID" value="AAM63872.1"/>
    <property type="molecule type" value="mRNA"/>
</dbReference>
<dbReference type="PIR" id="T10217">
    <property type="entry name" value="T10217"/>
</dbReference>
<dbReference type="RefSeq" id="NP_567718.1">
    <property type="nucleotide sequence ID" value="NM_118669.3"/>
</dbReference>
<dbReference type="PDB" id="4Y0B">
    <property type="method" value="X-ray"/>
    <property type="resolution" value="2.40 A"/>
    <property type="chains" value="A/B=64-238"/>
</dbReference>
<dbReference type="PDBsum" id="4Y0B"/>
<dbReference type="SMR" id="Q93WL3"/>
<dbReference type="FunCoup" id="Q93WL3">
    <property type="interactions" value="1827"/>
</dbReference>
<dbReference type="IntAct" id="Q93WL3">
    <property type="interactions" value="1"/>
</dbReference>
<dbReference type="STRING" id="3702.Q93WL3"/>
<dbReference type="MetOSite" id="Q93WL3"/>
<dbReference type="PaxDb" id="3702-AT4G25370.1"/>
<dbReference type="ProteomicsDB" id="220529"/>
<dbReference type="EnsemblPlants" id="AT4G25370.1">
    <property type="protein sequence ID" value="AT4G25370.1"/>
    <property type="gene ID" value="AT4G25370"/>
</dbReference>
<dbReference type="GeneID" id="828640"/>
<dbReference type="Gramene" id="AT4G25370.1">
    <property type="protein sequence ID" value="AT4G25370.1"/>
    <property type="gene ID" value="AT4G25370"/>
</dbReference>
<dbReference type="KEGG" id="ath:AT4G25370"/>
<dbReference type="Araport" id="AT4G25370"/>
<dbReference type="TAIR" id="AT4G25370">
    <property type="gene designation" value="CLPT1"/>
</dbReference>
<dbReference type="eggNOG" id="ENOG502QSIB">
    <property type="taxonomic scope" value="Eukaryota"/>
</dbReference>
<dbReference type="HOGENOM" id="CLU_086193_1_0_1"/>
<dbReference type="InParanoid" id="Q93WL3"/>
<dbReference type="OMA" id="NSNPRIF"/>
<dbReference type="PhylomeDB" id="Q93WL3"/>
<dbReference type="EvolutionaryTrace" id="Q93WL3"/>
<dbReference type="PRO" id="PR:Q93WL3"/>
<dbReference type="Proteomes" id="UP000006548">
    <property type="component" value="Chromosome 4"/>
</dbReference>
<dbReference type="ExpressionAtlas" id="Q93WL3">
    <property type="expression patterns" value="baseline and differential"/>
</dbReference>
<dbReference type="GO" id="GO:0009507">
    <property type="term" value="C:chloroplast"/>
    <property type="evidence" value="ECO:0007005"/>
    <property type="project" value="TAIR"/>
</dbReference>
<dbReference type="GO" id="GO:0009941">
    <property type="term" value="C:chloroplast envelope"/>
    <property type="evidence" value="ECO:0007005"/>
    <property type="project" value="TAIR"/>
</dbReference>
<dbReference type="GO" id="GO:0009570">
    <property type="term" value="C:chloroplast stroma"/>
    <property type="evidence" value="ECO:0007005"/>
    <property type="project" value="TAIR"/>
</dbReference>
<dbReference type="GO" id="GO:0005829">
    <property type="term" value="C:cytosol"/>
    <property type="evidence" value="ECO:0007005"/>
    <property type="project" value="TAIR"/>
</dbReference>
<dbReference type="GO" id="GO:0009532">
    <property type="term" value="C:plastid stroma"/>
    <property type="evidence" value="ECO:0000314"/>
    <property type="project" value="TAIR"/>
</dbReference>
<dbReference type="GO" id="GO:0009579">
    <property type="term" value="C:thylakoid"/>
    <property type="evidence" value="ECO:0007005"/>
    <property type="project" value="TAIR"/>
</dbReference>
<dbReference type="Gene3D" id="1.10.1780.10">
    <property type="entry name" value="Clp, N-terminal domain"/>
    <property type="match status" value="1"/>
</dbReference>
<dbReference type="InterPro" id="IPR036628">
    <property type="entry name" value="Clp_N_dom_sf"/>
</dbReference>
<dbReference type="InterPro" id="IPR004176">
    <property type="entry name" value="Clp_R_dom"/>
</dbReference>
<dbReference type="InterPro" id="IPR044217">
    <property type="entry name" value="CLPT1/2"/>
</dbReference>
<dbReference type="PANTHER" id="PTHR47016">
    <property type="entry name" value="ATP-DEPENDENT CLP PROTEASE ATP-BINDING SUBUNIT CLPT1, CHLOROPLASTIC"/>
    <property type="match status" value="1"/>
</dbReference>
<dbReference type="PANTHER" id="PTHR47016:SF1">
    <property type="entry name" value="ATP-DEPENDENT CLP PROTEASE ATP-BINDING SUBUNIT CLPT1, CHLOROPLASTIC"/>
    <property type="match status" value="1"/>
</dbReference>
<dbReference type="Pfam" id="PF02861">
    <property type="entry name" value="Clp_N"/>
    <property type="match status" value="2"/>
</dbReference>
<dbReference type="SUPFAM" id="SSF81923">
    <property type="entry name" value="Double Clp-N motif"/>
    <property type="match status" value="1"/>
</dbReference>
<dbReference type="PROSITE" id="PS51903">
    <property type="entry name" value="CLP_R"/>
    <property type="match status" value="1"/>
</dbReference>
<keyword id="KW-0002">3D-structure</keyword>
<keyword id="KW-0150">Chloroplast</keyword>
<keyword id="KW-0934">Plastid</keyword>
<keyword id="KW-1185">Reference proteome</keyword>
<keyword id="KW-0677">Repeat</keyword>
<keyword id="KW-0809">Transit peptide</keyword>
<name>CLPT1_ARATH</name>
<protein>
    <recommendedName>
        <fullName evidence="11">ATP-dependent Clp protease ATP-binding subunit CLPT1, chloroplastic</fullName>
    </recommendedName>
    <alternativeName>
        <fullName evidence="9">nClpC-like protein</fullName>
    </alternativeName>
</protein>
<evidence type="ECO:0000255" key="1">
    <source>
        <dbReference type="PROSITE-ProRule" id="PRU01251"/>
    </source>
</evidence>
<evidence type="ECO:0000269" key="2">
    <source>
    </source>
</evidence>
<evidence type="ECO:0000269" key="3">
    <source>
    </source>
</evidence>
<evidence type="ECO:0000269" key="4">
    <source>
    </source>
</evidence>
<evidence type="ECO:0000269" key="5">
    <source>
    </source>
</evidence>
<evidence type="ECO:0000269" key="6">
    <source>
    </source>
</evidence>
<evidence type="ECO:0000269" key="7">
    <source>
    </source>
</evidence>
<evidence type="ECO:0000269" key="8">
    <source>
    </source>
</evidence>
<evidence type="ECO:0000303" key="9">
    <source>
    </source>
</evidence>
<evidence type="ECO:0000303" key="10">
    <source>
    </source>
</evidence>
<evidence type="ECO:0000303" key="11">
    <source ref="7"/>
</evidence>
<evidence type="ECO:0000305" key="12"/>
<evidence type="ECO:0000305" key="13">
    <source>
    </source>
</evidence>
<evidence type="ECO:0000312" key="14">
    <source>
        <dbReference type="Araport" id="AT4G25370"/>
    </source>
</evidence>
<evidence type="ECO:0000312" key="15">
    <source>
        <dbReference type="EMBL" id="AAL15176.1"/>
    </source>
</evidence>
<evidence type="ECO:0000312" key="16">
    <source>
        <dbReference type="EMBL" id="CAB45514.1"/>
    </source>
</evidence>
<evidence type="ECO:0007829" key="17">
    <source>
        <dbReference type="PDB" id="4Y0B"/>
    </source>
</evidence>